<protein>
    <recommendedName>
        <fullName>Spindle pole component BBP1</fullName>
    </recommendedName>
</protein>
<dbReference type="EMBL" id="CR382126">
    <property type="protein sequence ID" value="CAG98084.1"/>
    <property type="molecule type" value="Genomic_DNA"/>
</dbReference>
<dbReference type="RefSeq" id="XP_455376.1">
    <property type="nucleotide sequence ID" value="XM_455376.1"/>
</dbReference>
<dbReference type="SMR" id="Q6CL13"/>
<dbReference type="FunCoup" id="Q6CL13">
    <property type="interactions" value="135"/>
</dbReference>
<dbReference type="STRING" id="284590.Q6CL13"/>
<dbReference type="PaxDb" id="284590-Q6CL13"/>
<dbReference type="KEGG" id="kla:KLLA0_F06534g"/>
<dbReference type="eggNOG" id="ENOG502RYZ2">
    <property type="taxonomic scope" value="Eukaryota"/>
</dbReference>
<dbReference type="HOGENOM" id="CLU_711875_0_0_1"/>
<dbReference type="InParanoid" id="Q6CL13"/>
<dbReference type="OMA" id="WTMDALF"/>
<dbReference type="Proteomes" id="UP000000598">
    <property type="component" value="Chromosome F"/>
</dbReference>
<dbReference type="GO" id="GO:0005737">
    <property type="term" value="C:cytoplasm"/>
    <property type="evidence" value="ECO:0007669"/>
    <property type="project" value="UniProtKB-KW"/>
</dbReference>
<dbReference type="GO" id="GO:0005816">
    <property type="term" value="C:spindle pole body"/>
    <property type="evidence" value="ECO:0007669"/>
    <property type="project" value="UniProtKB-SubCell"/>
</dbReference>
<dbReference type="InterPro" id="IPR029330">
    <property type="entry name" value="Bbp1_C"/>
</dbReference>
<dbReference type="InterPro" id="IPR029328">
    <property type="entry name" value="Bbp1_N"/>
</dbReference>
<dbReference type="Pfam" id="PF15272">
    <property type="entry name" value="BBP1_C"/>
    <property type="match status" value="1"/>
</dbReference>
<dbReference type="Pfam" id="PF15271">
    <property type="entry name" value="BBP1_N"/>
    <property type="match status" value="1"/>
</dbReference>
<feature type="chain" id="PRO_0000409172" description="Spindle pole component BBP1">
    <location>
        <begin position="1"/>
        <end position="398"/>
    </location>
</feature>
<feature type="region of interest" description="Disordered" evidence="3">
    <location>
        <begin position="93"/>
        <end position="115"/>
    </location>
</feature>
<feature type="region of interest" description="Disordered" evidence="3">
    <location>
        <begin position="351"/>
        <end position="382"/>
    </location>
</feature>
<feature type="coiled-coil region" evidence="2">
    <location>
        <begin position="201"/>
        <end position="350"/>
    </location>
</feature>
<feature type="compositionally biased region" description="Polar residues" evidence="3">
    <location>
        <begin position="356"/>
        <end position="382"/>
    </location>
</feature>
<keyword id="KW-0175">Coiled coil</keyword>
<keyword id="KW-0963">Cytoplasm</keyword>
<keyword id="KW-0206">Cytoskeleton</keyword>
<keyword id="KW-1185">Reference proteome</keyword>
<gene>
    <name type="primary">BBP1</name>
    <name type="ordered locus">KLLA0F06534g</name>
</gene>
<evidence type="ECO:0000250" key="1"/>
<evidence type="ECO:0000255" key="2"/>
<evidence type="ECO:0000256" key="3">
    <source>
        <dbReference type="SAM" id="MobiDB-lite"/>
    </source>
</evidence>
<evidence type="ECO:0000305" key="4"/>
<sequence>MGSDDTGGLFKWTIDALFNRDTSPSTMYDKQLQQDSFDEEIYSRPRASSFSDPDIYSKYELLRDEDEPDLLRPVSMNGLPYEKQDTNTFHARRARERRVQETPNIRRAPNPNDPIISKLFQVDEDDSQLNTNEMRSQREKFNTGRLPGKFPSPTKQYNARISNRDAFTGAERKAASTAPAIPPVAPSVQNLDYTPEYVKLMDKLSLNNKELRDLKVDVRERQKHGMEKETELKKKYLQIRQELIQELKQSKMIYDNYCKLYYKYKGVKRSIQLPTQTLASNSSMLDKIASLEKQIVDLSIEKDRLKKKSEERILSVELQKKELENKFEVERMIYERRIKDLEEKLYVHEHPIRPATDTSPVSSSSFMPHTQETSDSTASPYKEYNNTIDTQFLRNLVK</sequence>
<organism>
    <name type="scientific">Kluyveromyces lactis (strain ATCC 8585 / CBS 2359 / DSM 70799 / NBRC 1267 / NRRL Y-1140 / WM37)</name>
    <name type="common">Yeast</name>
    <name type="synonym">Candida sphaerica</name>
    <dbReference type="NCBI Taxonomy" id="284590"/>
    <lineage>
        <taxon>Eukaryota</taxon>
        <taxon>Fungi</taxon>
        <taxon>Dikarya</taxon>
        <taxon>Ascomycota</taxon>
        <taxon>Saccharomycotina</taxon>
        <taxon>Saccharomycetes</taxon>
        <taxon>Saccharomycetales</taxon>
        <taxon>Saccharomycetaceae</taxon>
        <taxon>Kluyveromyces</taxon>
    </lineage>
</organism>
<name>BBP1_KLULA</name>
<comment type="function">
    <text evidence="1">Component of the spindle pole body (SPB) required for insertion of the nascent SPB into the nuclear envelope and for the proper execution of spindle pole body (SPB) duplication. Connects the central plaque of the SPB with the half-bridge. Required for proper localization of CDC5 at the SPB and for proper M-phase progression (By similarity).</text>
</comment>
<comment type="subunit">
    <text evidence="1">Homodimer.</text>
</comment>
<comment type="subcellular location">
    <subcellularLocation>
        <location evidence="1">Cytoplasm</location>
        <location evidence="1">Cytoskeleton</location>
        <location evidence="1">Microtubule organizing center</location>
        <location evidence="1">Spindle pole body</location>
    </subcellularLocation>
    <text evidence="1">Associates with the periphary of the central plaque.</text>
</comment>
<comment type="similarity">
    <text evidence="4">Belongs to the BBP1 family.</text>
</comment>
<reference key="1">
    <citation type="journal article" date="2004" name="Nature">
        <title>Genome evolution in yeasts.</title>
        <authorList>
            <person name="Dujon B."/>
            <person name="Sherman D."/>
            <person name="Fischer G."/>
            <person name="Durrens P."/>
            <person name="Casaregola S."/>
            <person name="Lafontaine I."/>
            <person name="de Montigny J."/>
            <person name="Marck C."/>
            <person name="Neuveglise C."/>
            <person name="Talla E."/>
            <person name="Goffard N."/>
            <person name="Frangeul L."/>
            <person name="Aigle M."/>
            <person name="Anthouard V."/>
            <person name="Babour A."/>
            <person name="Barbe V."/>
            <person name="Barnay S."/>
            <person name="Blanchin S."/>
            <person name="Beckerich J.-M."/>
            <person name="Beyne E."/>
            <person name="Bleykasten C."/>
            <person name="Boisrame A."/>
            <person name="Boyer J."/>
            <person name="Cattolico L."/>
            <person name="Confanioleri F."/>
            <person name="de Daruvar A."/>
            <person name="Despons L."/>
            <person name="Fabre E."/>
            <person name="Fairhead C."/>
            <person name="Ferry-Dumazet H."/>
            <person name="Groppi A."/>
            <person name="Hantraye F."/>
            <person name="Hennequin C."/>
            <person name="Jauniaux N."/>
            <person name="Joyet P."/>
            <person name="Kachouri R."/>
            <person name="Kerrest A."/>
            <person name="Koszul R."/>
            <person name="Lemaire M."/>
            <person name="Lesur I."/>
            <person name="Ma L."/>
            <person name="Muller H."/>
            <person name="Nicaud J.-M."/>
            <person name="Nikolski M."/>
            <person name="Oztas S."/>
            <person name="Ozier-Kalogeropoulos O."/>
            <person name="Pellenz S."/>
            <person name="Potier S."/>
            <person name="Richard G.-F."/>
            <person name="Straub M.-L."/>
            <person name="Suleau A."/>
            <person name="Swennen D."/>
            <person name="Tekaia F."/>
            <person name="Wesolowski-Louvel M."/>
            <person name="Westhof E."/>
            <person name="Wirth B."/>
            <person name="Zeniou-Meyer M."/>
            <person name="Zivanovic Y."/>
            <person name="Bolotin-Fukuhara M."/>
            <person name="Thierry A."/>
            <person name="Bouchier C."/>
            <person name="Caudron B."/>
            <person name="Scarpelli C."/>
            <person name="Gaillardin C."/>
            <person name="Weissenbach J."/>
            <person name="Wincker P."/>
            <person name="Souciet J.-L."/>
        </authorList>
    </citation>
    <scope>NUCLEOTIDE SEQUENCE [LARGE SCALE GENOMIC DNA]</scope>
    <source>
        <strain>ATCC 8585 / CBS 2359 / DSM 70799 / NBRC 1267 / NRRL Y-1140 / WM37</strain>
    </source>
</reference>
<accession>Q6CL13</accession>
<proteinExistence type="inferred from homology"/>